<sequence length="85" mass="9215">MATKKGGGSTKNGRDSVSKRLGVKVYGGQQAIAGNIIVRQRGTEYKPGKNVGIGRDHTLYALVDGIVTFEHVTKERQQISVYPKV</sequence>
<proteinExistence type="inferred from homology"/>
<evidence type="ECO:0000255" key="1">
    <source>
        <dbReference type="HAMAP-Rule" id="MF_00539"/>
    </source>
</evidence>
<evidence type="ECO:0000305" key="2"/>
<accession>B0SRT6</accession>
<feature type="chain" id="PRO_1000128767" description="Large ribosomal subunit protein bL27">
    <location>
        <begin position="1"/>
        <end position="85"/>
    </location>
</feature>
<protein>
    <recommendedName>
        <fullName evidence="1">Large ribosomal subunit protein bL27</fullName>
    </recommendedName>
    <alternativeName>
        <fullName evidence="2">50S ribosomal protein L27</fullName>
    </alternativeName>
</protein>
<dbReference type="EMBL" id="CP000786">
    <property type="protein sequence ID" value="ABZ97881.1"/>
    <property type="molecule type" value="Genomic_DNA"/>
</dbReference>
<dbReference type="RefSeq" id="WP_012388759.1">
    <property type="nucleotide sequence ID" value="NC_010602.1"/>
</dbReference>
<dbReference type="SMR" id="B0SRT6"/>
<dbReference type="STRING" id="456481.LEPBI_I1775"/>
<dbReference type="KEGG" id="lbi:LEPBI_I1775"/>
<dbReference type="HOGENOM" id="CLU_095424_4_0_12"/>
<dbReference type="OrthoDB" id="9803474at2"/>
<dbReference type="BioCyc" id="LBIF456481:LEPBI_RS08770-MONOMER"/>
<dbReference type="Proteomes" id="UP000001847">
    <property type="component" value="Chromosome I"/>
</dbReference>
<dbReference type="GO" id="GO:1990904">
    <property type="term" value="C:ribonucleoprotein complex"/>
    <property type="evidence" value="ECO:0007669"/>
    <property type="project" value="UniProtKB-KW"/>
</dbReference>
<dbReference type="GO" id="GO:0005840">
    <property type="term" value="C:ribosome"/>
    <property type="evidence" value="ECO:0007669"/>
    <property type="project" value="UniProtKB-KW"/>
</dbReference>
<dbReference type="GO" id="GO:0003735">
    <property type="term" value="F:structural constituent of ribosome"/>
    <property type="evidence" value="ECO:0007669"/>
    <property type="project" value="InterPro"/>
</dbReference>
<dbReference type="GO" id="GO:0006412">
    <property type="term" value="P:translation"/>
    <property type="evidence" value="ECO:0007669"/>
    <property type="project" value="UniProtKB-UniRule"/>
</dbReference>
<dbReference type="FunFam" id="2.40.50.100:FF:000004">
    <property type="entry name" value="50S ribosomal protein L27"/>
    <property type="match status" value="1"/>
</dbReference>
<dbReference type="Gene3D" id="2.40.50.100">
    <property type="match status" value="1"/>
</dbReference>
<dbReference type="HAMAP" id="MF_00539">
    <property type="entry name" value="Ribosomal_bL27"/>
    <property type="match status" value="1"/>
</dbReference>
<dbReference type="InterPro" id="IPR001684">
    <property type="entry name" value="Ribosomal_bL27"/>
</dbReference>
<dbReference type="InterPro" id="IPR018261">
    <property type="entry name" value="Ribosomal_bL27_CS"/>
</dbReference>
<dbReference type="NCBIfam" id="TIGR00062">
    <property type="entry name" value="L27"/>
    <property type="match status" value="1"/>
</dbReference>
<dbReference type="PANTHER" id="PTHR15893:SF0">
    <property type="entry name" value="LARGE RIBOSOMAL SUBUNIT PROTEIN BL27M"/>
    <property type="match status" value="1"/>
</dbReference>
<dbReference type="PANTHER" id="PTHR15893">
    <property type="entry name" value="RIBOSOMAL PROTEIN L27"/>
    <property type="match status" value="1"/>
</dbReference>
<dbReference type="Pfam" id="PF01016">
    <property type="entry name" value="Ribosomal_L27"/>
    <property type="match status" value="1"/>
</dbReference>
<dbReference type="PRINTS" id="PR00063">
    <property type="entry name" value="RIBOSOMALL27"/>
</dbReference>
<dbReference type="SUPFAM" id="SSF110324">
    <property type="entry name" value="Ribosomal L27 protein-like"/>
    <property type="match status" value="1"/>
</dbReference>
<dbReference type="PROSITE" id="PS00831">
    <property type="entry name" value="RIBOSOMAL_L27"/>
    <property type="match status" value="1"/>
</dbReference>
<keyword id="KW-1185">Reference proteome</keyword>
<keyword id="KW-0687">Ribonucleoprotein</keyword>
<keyword id="KW-0689">Ribosomal protein</keyword>
<comment type="similarity">
    <text evidence="1">Belongs to the bacterial ribosomal protein bL27 family.</text>
</comment>
<gene>
    <name evidence="1" type="primary">rpmA</name>
    <name type="ordered locus">LEPBI_I1775</name>
</gene>
<organism>
    <name type="scientific">Leptospira biflexa serovar Patoc (strain Patoc 1 / ATCC 23582 / Paris)</name>
    <dbReference type="NCBI Taxonomy" id="456481"/>
    <lineage>
        <taxon>Bacteria</taxon>
        <taxon>Pseudomonadati</taxon>
        <taxon>Spirochaetota</taxon>
        <taxon>Spirochaetia</taxon>
        <taxon>Leptospirales</taxon>
        <taxon>Leptospiraceae</taxon>
        <taxon>Leptospira</taxon>
    </lineage>
</organism>
<reference key="1">
    <citation type="journal article" date="2008" name="PLoS ONE">
        <title>Genome sequence of the saprophyte Leptospira biflexa provides insights into the evolution of Leptospira and the pathogenesis of leptospirosis.</title>
        <authorList>
            <person name="Picardeau M."/>
            <person name="Bulach D.M."/>
            <person name="Bouchier C."/>
            <person name="Zuerner R.L."/>
            <person name="Zidane N."/>
            <person name="Wilson P.J."/>
            <person name="Creno S."/>
            <person name="Kuczek E.S."/>
            <person name="Bommezzadri S."/>
            <person name="Davis J.C."/>
            <person name="McGrath A."/>
            <person name="Johnson M.J."/>
            <person name="Boursaux-Eude C."/>
            <person name="Seemann T."/>
            <person name="Rouy Z."/>
            <person name="Coppel R.L."/>
            <person name="Rood J.I."/>
            <person name="Lajus A."/>
            <person name="Davies J.K."/>
            <person name="Medigue C."/>
            <person name="Adler B."/>
        </authorList>
    </citation>
    <scope>NUCLEOTIDE SEQUENCE [LARGE SCALE GENOMIC DNA]</scope>
    <source>
        <strain>Patoc 1 / ATCC 23582 / Paris</strain>
    </source>
</reference>
<name>RL27_LEPBP</name>